<name>IHFB_MANHA</name>
<evidence type="ECO:0000250" key="1"/>
<evidence type="ECO:0000305" key="2"/>
<organism>
    <name type="scientific">Mannheimia haemolytica</name>
    <name type="common">Pasteurella haemolytica</name>
    <dbReference type="NCBI Taxonomy" id="75985"/>
    <lineage>
        <taxon>Bacteria</taxon>
        <taxon>Pseudomonadati</taxon>
        <taxon>Pseudomonadota</taxon>
        <taxon>Gammaproteobacteria</taxon>
        <taxon>Pasteurellales</taxon>
        <taxon>Pasteurellaceae</taxon>
        <taxon>Mannheimia</taxon>
    </lineage>
</organism>
<feature type="chain" id="PRO_0000105057" description="Integration host factor subunit beta">
    <location>
        <begin position="1"/>
        <end position="93"/>
    </location>
</feature>
<reference key="1">
    <citation type="journal article" date="1997" name="FEMS Microbiol. Lett.">
        <title>Isolation and characterization of the integration host factor genes of Pasteurella haemolytica.</title>
        <authorList>
            <person name="Highlander S.K."/>
            <person name="Garza O."/>
            <person name="Brown B.J."/>
            <person name="Koby S."/>
            <person name="Oppenheim A.B."/>
        </authorList>
    </citation>
    <scope>NUCLEOTIDE SEQUENCE [GENOMIC DNA]</scope>
    <source>
        <strain>Serotype A1 / PH101</strain>
    </source>
</reference>
<protein>
    <recommendedName>
        <fullName>Integration host factor subunit beta</fullName>
        <shortName>IHF-beta</shortName>
    </recommendedName>
</protein>
<keyword id="KW-0233">DNA recombination</keyword>
<keyword id="KW-0238">DNA-binding</keyword>
<keyword id="KW-0804">Transcription</keyword>
<keyword id="KW-0805">Transcription regulation</keyword>
<keyword id="KW-0810">Translation regulation</keyword>
<proteinExistence type="inferred from homology"/>
<sequence length="93" mass="10490">MTKSELIESLASKNPSLPIKMVEHCVKELLEQLTATLEEGERIEVRGFGSFSLHYRQPRLGRNPKTGESVLLGAKYVPHFKAGKDLKERVDLL</sequence>
<comment type="function">
    <text evidence="1">This protein is one of the two subunits of integration host factor, a specific DNA-binding protein that functions in genetic recombination as well as in transcriptional and translational control.</text>
</comment>
<comment type="subunit">
    <text>Heterodimer of an alpha and a beta chain.</text>
</comment>
<comment type="similarity">
    <text evidence="2">Belongs to the bacterial histone-like protein family.</text>
</comment>
<gene>
    <name type="primary">ihfB</name>
    <name type="synonym">himD</name>
</gene>
<accession>P95519</accession>
<dbReference type="EMBL" id="U56139">
    <property type="protein sequence ID" value="AAC44846.1"/>
    <property type="molecule type" value="Genomic_DNA"/>
</dbReference>
<dbReference type="RefSeq" id="WP_006248556.1">
    <property type="nucleotide sequence ID" value="NZ_VAJK01000004.1"/>
</dbReference>
<dbReference type="SMR" id="P95519"/>
<dbReference type="STRING" id="75985.WC39_06635"/>
<dbReference type="OrthoDB" id="9804203at2"/>
<dbReference type="GO" id="GO:0005694">
    <property type="term" value="C:chromosome"/>
    <property type="evidence" value="ECO:0007669"/>
    <property type="project" value="InterPro"/>
</dbReference>
<dbReference type="GO" id="GO:0005829">
    <property type="term" value="C:cytosol"/>
    <property type="evidence" value="ECO:0007669"/>
    <property type="project" value="TreeGrafter"/>
</dbReference>
<dbReference type="GO" id="GO:0003677">
    <property type="term" value="F:DNA binding"/>
    <property type="evidence" value="ECO:0007669"/>
    <property type="project" value="UniProtKB-UniRule"/>
</dbReference>
<dbReference type="GO" id="GO:0030527">
    <property type="term" value="F:structural constituent of chromatin"/>
    <property type="evidence" value="ECO:0007669"/>
    <property type="project" value="InterPro"/>
</dbReference>
<dbReference type="GO" id="GO:0006310">
    <property type="term" value="P:DNA recombination"/>
    <property type="evidence" value="ECO:0007669"/>
    <property type="project" value="UniProtKB-UniRule"/>
</dbReference>
<dbReference type="GO" id="GO:0006355">
    <property type="term" value="P:regulation of DNA-templated transcription"/>
    <property type="evidence" value="ECO:0007669"/>
    <property type="project" value="UniProtKB-UniRule"/>
</dbReference>
<dbReference type="GO" id="GO:0006417">
    <property type="term" value="P:regulation of translation"/>
    <property type="evidence" value="ECO:0007669"/>
    <property type="project" value="UniProtKB-UniRule"/>
</dbReference>
<dbReference type="CDD" id="cd13836">
    <property type="entry name" value="IHF_B"/>
    <property type="match status" value="1"/>
</dbReference>
<dbReference type="FunFam" id="4.10.520.10:FF:000003">
    <property type="entry name" value="Integration host factor subunit beta"/>
    <property type="match status" value="1"/>
</dbReference>
<dbReference type="Gene3D" id="4.10.520.10">
    <property type="entry name" value="IHF-like DNA-binding proteins"/>
    <property type="match status" value="1"/>
</dbReference>
<dbReference type="HAMAP" id="MF_00381">
    <property type="entry name" value="IHF_beta"/>
    <property type="match status" value="1"/>
</dbReference>
<dbReference type="InterPro" id="IPR000119">
    <property type="entry name" value="Hist_DNA-bd"/>
</dbReference>
<dbReference type="InterPro" id="IPR020816">
    <property type="entry name" value="Histone-like_DNA-bd_CS"/>
</dbReference>
<dbReference type="InterPro" id="IPR010992">
    <property type="entry name" value="IHF-like_DNA-bd_dom_sf"/>
</dbReference>
<dbReference type="InterPro" id="IPR005685">
    <property type="entry name" value="IHF_beta"/>
</dbReference>
<dbReference type="NCBIfam" id="TIGR00988">
    <property type="entry name" value="hip"/>
    <property type="match status" value="1"/>
</dbReference>
<dbReference type="NCBIfam" id="NF001222">
    <property type="entry name" value="PRK00199.1"/>
    <property type="match status" value="1"/>
</dbReference>
<dbReference type="PANTHER" id="PTHR33175">
    <property type="entry name" value="DNA-BINDING PROTEIN HU"/>
    <property type="match status" value="1"/>
</dbReference>
<dbReference type="PANTHER" id="PTHR33175:SF5">
    <property type="entry name" value="INTEGRATION HOST FACTOR SUBUNIT BETA"/>
    <property type="match status" value="1"/>
</dbReference>
<dbReference type="Pfam" id="PF00216">
    <property type="entry name" value="Bac_DNA_binding"/>
    <property type="match status" value="1"/>
</dbReference>
<dbReference type="PRINTS" id="PR01727">
    <property type="entry name" value="DNABINDINGHU"/>
</dbReference>
<dbReference type="SMART" id="SM00411">
    <property type="entry name" value="BHL"/>
    <property type="match status" value="1"/>
</dbReference>
<dbReference type="SUPFAM" id="SSF47729">
    <property type="entry name" value="IHF-like DNA-binding proteins"/>
    <property type="match status" value="1"/>
</dbReference>
<dbReference type="PROSITE" id="PS00045">
    <property type="entry name" value="HISTONE_LIKE"/>
    <property type="match status" value="1"/>
</dbReference>